<name>SYS_FERNB</name>
<sequence>MIDLKLLRKDPQHFYEALKKRNYSTDIIDEIVNLDKEWRNQLNIVNNLKAKRNELSKLVARYKAEGKNQEAEEIIAESKKIGEEIAQYEGKQKELEEKMYNLALYIPNPPHESVPVGKDETENVEIRRWGEPRKFDFEPKAHWDLGPELGMLDFDRGSKLSGSRFTVMFGAIAKLERAIAQFMLDVHTKNGYIEVNVPHLVKRETITATGQLPKFSEELYTCERDDLFLIPTAEVSLAALHIDEILEENKLPKKYTAFTPCYRREAGSYGKDVRGLIRQHQFEKVELVWYTTPERSFEDLEQLTQDAERILQLLGLPYRVVTLCTGDLGFAAAKTYDIEVWLPSYNSYKEISSCSNVTDFQARRGNIRYRAKDGKLNYVHTLNGSGLAIGRTLVAIMENYQNPDGTITIPEVLRPYMGTDIIKPME</sequence>
<dbReference type="EC" id="6.1.1.11" evidence="1"/>
<dbReference type="EMBL" id="CP000771">
    <property type="protein sequence ID" value="ABS61361.1"/>
    <property type="molecule type" value="Genomic_DNA"/>
</dbReference>
<dbReference type="RefSeq" id="WP_011994666.1">
    <property type="nucleotide sequence ID" value="NC_009718.1"/>
</dbReference>
<dbReference type="SMR" id="A7HN78"/>
<dbReference type="STRING" id="381764.Fnod_1518"/>
<dbReference type="KEGG" id="fno:Fnod_1518"/>
<dbReference type="eggNOG" id="COG0172">
    <property type="taxonomic scope" value="Bacteria"/>
</dbReference>
<dbReference type="HOGENOM" id="CLU_023797_1_1_0"/>
<dbReference type="OrthoDB" id="9804647at2"/>
<dbReference type="UniPathway" id="UPA00906">
    <property type="reaction ID" value="UER00895"/>
</dbReference>
<dbReference type="Proteomes" id="UP000002415">
    <property type="component" value="Chromosome"/>
</dbReference>
<dbReference type="GO" id="GO:0005737">
    <property type="term" value="C:cytoplasm"/>
    <property type="evidence" value="ECO:0007669"/>
    <property type="project" value="UniProtKB-SubCell"/>
</dbReference>
<dbReference type="GO" id="GO:0005524">
    <property type="term" value="F:ATP binding"/>
    <property type="evidence" value="ECO:0007669"/>
    <property type="project" value="UniProtKB-UniRule"/>
</dbReference>
<dbReference type="GO" id="GO:0004828">
    <property type="term" value="F:serine-tRNA ligase activity"/>
    <property type="evidence" value="ECO:0007669"/>
    <property type="project" value="UniProtKB-UniRule"/>
</dbReference>
<dbReference type="GO" id="GO:0016260">
    <property type="term" value="P:selenocysteine biosynthetic process"/>
    <property type="evidence" value="ECO:0007669"/>
    <property type="project" value="UniProtKB-UniRule"/>
</dbReference>
<dbReference type="GO" id="GO:0006434">
    <property type="term" value="P:seryl-tRNA aminoacylation"/>
    <property type="evidence" value="ECO:0007669"/>
    <property type="project" value="UniProtKB-UniRule"/>
</dbReference>
<dbReference type="CDD" id="cd00770">
    <property type="entry name" value="SerRS_core"/>
    <property type="match status" value="1"/>
</dbReference>
<dbReference type="Gene3D" id="3.30.930.10">
    <property type="entry name" value="Bira Bifunctional Protein, Domain 2"/>
    <property type="match status" value="1"/>
</dbReference>
<dbReference type="Gene3D" id="1.10.287.40">
    <property type="entry name" value="Serine-tRNA synthetase, tRNA binding domain"/>
    <property type="match status" value="1"/>
</dbReference>
<dbReference type="HAMAP" id="MF_00176">
    <property type="entry name" value="Ser_tRNA_synth_type1"/>
    <property type="match status" value="1"/>
</dbReference>
<dbReference type="InterPro" id="IPR002314">
    <property type="entry name" value="aa-tRNA-synt_IIb"/>
</dbReference>
<dbReference type="InterPro" id="IPR006195">
    <property type="entry name" value="aa-tRNA-synth_II"/>
</dbReference>
<dbReference type="InterPro" id="IPR045864">
    <property type="entry name" value="aa-tRNA-synth_II/BPL/LPL"/>
</dbReference>
<dbReference type="InterPro" id="IPR002317">
    <property type="entry name" value="Ser-tRNA-ligase_type_1"/>
</dbReference>
<dbReference type="InterPro" id="IPR015866">
    <property type="entry name" value="Ser-tRNA-synth_1_N"/>
</dbReference>
<dbReference type="InterPro" id="IPR042103">
    <property type="entry name" value="SerRS_1_N_sf"/>
</dbReference>
<dbReference type="InterPro" id="IPR033729">
    <property type="entry name" value="SerRS_core"/>
</dbReference>
<dbReference type="InterPro" id="IPR010978">
    <property type="entry name" value="tRNA-bd_arm"/>
</dbReference>
<dbReference type="NCBIfam" id="TIGR00414">
    <property type="entry name" value="serS"/>
    <property type="match status" value="1"/>
</dbReference>
<dbReference type="PANTHER" id="PTHR43697:SF1">
    <property type="entry name" value="SERINE--TRNA LIGASE"/>
    <property type="match status" value="1"/>
</dbReference>
<dbReference type="PANTHER" id="PTHR43697">
    <property type="entry name" value="SERYL-TRNA SYNTHETASE"/>
    <property type="match status" value="1"/>
</dbReference>
<dbReference type="Pfam" id="PF02403">
    <property type="entry name" value="Seryl_tRNA_N"/>
    <property type="match status" value="1"/>
</dbReference>
<dbReference type="Pfam" id="PF00587">
    <property type="entry name" value="tRNA-synt_2b"/>
    <property type="match status" value="1"/>
</dbReference>
<dbReference type="PIRSF" id="PIRSF001529">
    <property type="entry name" value="Ser-tRNA-synth_IIa"/>
    <property type="match status" value="1"/>
</dbReference>
<dbReference type="PRINTS" id="PR00981">
    <property type="entry name" value="TRNASYNTHSER"/>
</dbReference>
<dbReference type="SUPFAM" id="SSF55681">
    <property type="entry name" value="Class II aaRS and biotin synthetases"/>
    <property type="match status" value="1"/>
</dbReference>
<dbReference type="SUPFAM" id="SSF46589">
    <property type="entry name" value="tRNA-binding arm"/>
    <property type="match status" value="1"/>
</dbReference>
<dbReference type="PROSITE" id="PS50862">
    <property type="entry name" value="AA_TRNA_LIGASE_II"/>
    <property type="match status" value="1"/>
</dbReference>
<reference key="1">
    <citation type="submission" date="2007-07" db="EMBL/GenBank/DDBJ databases">
        <title>Complete sequence of Fervidobacterium nodosum Rt17-B1.</title>
        <authorList>
            <consortium name="US DOE Joint Genome Institute"/>
            <person name="Copeland A."/>
            <person name="Lucas S."/>
            <person name="Lapidus A."/>
            <person name="Barry K."/>
            <person name="Glavina del Rio T."/>
            <person name="Dalin E."/>
            <person name="Tice H."/>
            <person name="Pitluck S."/>
            <person name="Saunders E."/>
            <person name="Brettin T."/>
            <person name="Bruce D."/>
            <person name="Detter J.C."/>
            <person name="Han C."/>
            <person name="Schmutz J."/>
            <person name="Larimer F."/>
            <person name="Land M."/>
            <person name="Hauser L."/>
            <person name="Kyrpides N."/>
            <person name="Mikhailova N."/>
            <person name="Nelson K."/>
            <person name="Gogarten J.P."/>
            <person name="Noll K."/>
            <person name="Richardson P."/>
        </authorList>
    </citation>
    <scope>NUCLEOTIDE SEQUENCE [LARGE SCALE GENOMIC DNA]</scope>
    <source>
        <strain>ATCC 35602 / DSM 5306 / Rt17-B1</strain>
    </source>
</reference>
<feature type="chain" id="PRO_1000071634" description="Serine--tRNA ligase">
    <location>
        <begin position="1"/>
        <end position="426"/>
    </location>
</feature>
<feature type="binding site" evidence="1">
    <location>
        <begin position="232"/>
        <end position="234"/>
    </location>
    <ligand>
        <name>L-serine</name>
        <dbReference type="ChEBI" id="CHEBI:33384"/>
    </ligand>
</feature>
<feature type="binding site" evidence="1">
    <location>
        <begin position="263"/>
        <end position="265"/>
    </location>
    <ligand>
        <name>ATP</name>
        <dbReference type="ChEBI" id="CHEBI:30616"/>
    </ligand>
</feature>
<feature type="binding site" evidence="1">
    <location>
        <position position="286"/>
    </location>
    <ligand>
        <name>L-serine</name>
        <dbReference type="ChEBI" id="CHEBI:33384"/>
    </ligand>
</feature>
<feature type="binding site" evidence="1">
    <location>
        <begin position="350"/>
        <end position="353"/>
    </location>
    <ligand>
        <name>ATP</name>
        <dbReference type="ChEBI" id="CHEBI:30616"/>
    </ligand>
</feature>
<feature type="binding site" evidence="1">
    <location>
        <position position="385"/>
    </location>
    <ligand>
        <name>L-serine</name>
        <dbReference type="ChEBI" id="CHEBI:33384"/>
    </ligand>
</feature>
<proteinExistence type="inferred from homology"/>
<accession>A7HN78</accession>
<comment type="function">
    <text evidence="1">Catalyzes the attachment of serine to tRNA(Ser). Is also able to aminoacylate tRNA(Sec) with serine, to form the misacylated tRNA L-seryl-tRNA(Sec), which will be further converted into selenocysteinyl-tRNA(Sec).</text>
</comment>
<comment type="catalytic activity">
    <reaction evidence="1">
        <text>tRNA(Ser) + L-serine + ATP = L-seryl-tRNA(Ser) + AMP + diphosphate + H(+)</text>
        <dbReference type="Rhea" id="RHEA:12292"/>
        <dbReference type="Rhea" id="RHEA-COMP:9669"/>
        <dbReference type="Rhea" id="RHEA-COMP:9703"/>
        <dbReference type="ChEBI" id="CHEBI:15378"/>
        <dbReference type="ChEBI" id="CHEBI:30616"/>
        <dbReference type="ChEBI" id="CHEBI:33019"/>
        <dbReference type="ChEBI" id="CHEBI:33384"/>
        <dbReference type="ChEBI" id="CHEBI:78442"/>
        <dbReference type="ChEBI" id="CHEBI:78533"/>
        <dbReference type="ChEBI" id="CHEBI:456215"/>
        <dbReference type="EC" id="6.1.1.11"/>
    </reaction>
</comment>
<comment type="catalytic activity">
    <reaction evidence="1">
        <text>tRNA(Sec) + L-serine + ATP = L-seryl-tRNA(Sec) + AMP + diphosphate + H(+)</text>
        <dbReference type="Rhea" id="RHEA:42580"/>
        <dbReference type="Rhea" id="RHEA-COMP:9742"/>
        <dbReference type="Rhea" id="RHEA-COMP:10128"/>
        <dbReference type="ChEBI" id="CHEBI:15378"/>
        <dbReference type="ChEBI" id="CHEBI:30616"/>
        <dbReference type="ChEBI" id="CHEBI:33019"/>
        <dbReference type="ChEBI" id="CHEBI:33384"/>
        <dbReference type="ChEBI" id="CHEBI:78442"/>
        <dbReference type="ChEBI" id="CHEBI:78533"/>
        <dbReference type="ChEBI" id="CHEBI:456215"/>
        <dbReference type="EC" id="6.1.1.11"/>
    </reaction>
</comment>
<comment type="pathway">
    <text evidence="1">Aminoacyl-tRNA biosynthesis; selenocysteinyl-tRNA(Sec) biosynthesis; L-seryl-tRNA(Sec) from L-serine and tRNA(Sec): step 1/1.</text>
</comment>
<comment type="subunit">
    <text evidence="1">Homodimer. The tRNA molecule binds across the dimer.</text>
</comment>
<comment type="subcellular location">
    <subcellularLocation>
        <location evidence="1">Cytoplasm</location>
    </subcellularLocation>
</comment>
<comment type="domain">
    <text evidence="1">Consists of two distinct domains, a catalytic core and a N-terminal extension that is involved in tRNA binding.</text>
</comment>
<comment type="similarity">
    <text evidence="1">Belongs to the class-II aminoacyl-tRNA synthetase family. Type-1 seryl-tRNA synthetase subfamily.</text>
</comment>
<evidence type="ECO:0000255" key="1">
    <source>
        <dbReference type="HAMAP-Rule" id="MF_00176"/>
    </source>
</evidence>
<protein>
    <recommendedName>
        <fullName evidence="1">Serine--tRNA ligase</fullName>
        <ecNumber evidence="1">6.1.1.11</ecNumber>
    </recommendedName>
    <alternativeName>
        <fullName evidence="1">Seryl-tRNA synthetase</fullName>
        <shortName evidence="1">SerRS</shortName>
    </alternativeName>
    <alternativeName>
        <fullName evidence="1">Seryl-tRNA(Ser/Sec) synthetase</fullName>
    </alternativeName>
</protein>
<keyword id="KW-0030">Aminoacyl-tRNA synthetase</keyword>
<keyword id="KW-0067">ATP-binding</keyword>
<keyword id="KW-0963">Cytoplasm</keyword>
<keyword id="KW-0436">Ligase</keyword>
<keyword id="KW-0547">Nucleotide-binding</keyword>
<keyword id="KW-0648">Protein biosynthesis</keyword>
<keyword id="KW-1185">Reference proteome</keyword>
<gene>
    <name evidence="1" type="primary">serS</name>
    <name type="ordered locus">Fnod_1518</name>
</gene>
<organism>
    <name type="scientific">Fervidobacterium nodosum (strain ATCC 35602 / DSM 5306 / Rt17-B1)</name>
    <dbReference type="NCBI Taxonomy" id="381764"/>
    <lineage>
        <taxon>Bacteria</taxon>
        <taxon>Thermotogati</taxon>
        <taxon>Thermotogota</taxon>
        <taxon>Thermotogae</taxon>
        <taxon>Thermotogales</taxon>
        <taxon>Fervidobacteriaceae</taxon>
        <taxon>Fervidobacterium</taxon>
    </lineage>
</organism>